<evidence type="ECO:0000255" key="1">
    <source>
        <dbReference type="HAMAP-Rule" id="MF_01200"/>
    </source>
</evidence>
<accession>Q44843</accession>
<keyword id="KW-0210">Decarboxylase</keyword>
<keyword id="KW-0456">Lyase</keyword>
<keyword id="KW-0665">Pyrimidine biosynthesis</keyword>
<proteinExistence type="inferred from homology"/>
<name>PYRF_BARBA</name>
<organism>
    <name type="scientific">Bartonella bacilliformis</name>
    <dbReference type="NCBI Taxonomy" id="774"/>
    <lineage>
        <taxon>Bacteria</taxon>
        <taxon>Pseudomonadati</taxon>
        <taxon>Pseudomonadota</taxon>
        <taxon>Alphaproteobacteria</taxon>
        <taxon>Hyphomicrobiales</taxon>
        <taxon>Bartonellaceae</taxon>
        <taxon>Bartonella</taxon>
    </lineage>
</organism>
<feature type="chain" id="PRO_0000134528" description="Orotidine 5'-phosphate decarboxylase">
    <location>
        <begin position="1" status="less than"/>
        <end position="235"/>
    </location>
</feature>
<feature type="active site" description="Proton donor" evidence="1">
    <location>
        <position position="68"/>
    </location>
</feature>
<feature type="binding site" evidence="1">
    <location>
        <position position="17"/>
    </location>
    <ligand>
        <name>substrate</name>
    </ligand>
</feature>
<feature type="binding site" evidence="1">
    <location>
        <position position="39"/>
    </location>
    <ligand>
        <name>substrate</name>
    </ligand>
</feature>
<feature type="binding site" evidence="1">
    <location>
        <begin position="66"/>
        <end position="75"/>
    </location>
    <ligand>
        <name>substrate</name>
    </ligand>
</feature>
<feature type="binding site" evidence="1">
    <location>
        <position position="121"/>
    </location>
    <ligand>
        <name>substrate</name>
    </ligand>
</feature>
<feature type="binding site" evidence="1">
    <location>
        <position position="182"/>
    </location>
    <ligand>
        <name>substrate</name>
    </ligand>
</feature>
<feature type="binding site" evidence="1">
    <location>
        <position position="191"/>
    </location>
    <ligand>
        <name>substrate</name>
    </ligand>
</feature>
<feature type="binding site" evidence="1">
    <location>
        <position position="212"/>
    </location>
    <ligand>
        <name>substrate</name>
    </ligand>
</feature>
<feature type="non-terminal residue">
    <location>
        <position position="1"/>
    </location>
</feature>
<sequence length="235" mass="25093">GVVDDNSNRERLIVGLDVPNIKQAEKLVTQLGDEVSFYKIGYQLAFSGGMDFVQDLIQARKKVFFDMKLLDIDHTVARAVENIAKLGVSMLTLHAYPTVMKAAVAAAKGSDLCLLGVTVLTSMDEADLHNAGYKDSPKKLAFKRAEQAREAGMGGIVSSALEAAALRKVIGSDMALVTPGIRPMGSDKGDQKRVMAPRQALDSGASHLVVARPIIQADDPLVATKKILAEMADGC</sequence>
<dbReference type="EC" id="4.1.1.23" evidence="1"/>
<dbReference type="EMBL" id="U57689">
    <property type="protein sequence ID" value="AAB02248.1"/>
    <property type="molecule type" value="Genomic_DNA"/>
</dbReference>
<dbReference type="SMR" id="Q44843"/>
<dbReference type="UniPathway" id="UPA00070">
    <property type="reaction ID" value="UER00120"/>
</dbReference>
<dbReference type="GO" id="GO:0005829">
    <property type="term" value="C:cytosol"/>
    <property type="evidence" value="ECO:0007669"/>
    <property type="project" value="TreeGrafter"/>
</dbReference>
<dbReference type="GO" id="GO:0004590">
    <property type="term" value="F:orotidine-5'-phosphate decarboxylase activity"/>
    <property type="evidence" value="ECO:0007669"/>
    <property type="project" value="UniProtKB-EC"/>
</dbReference>
<dbReference type="GO" id="GO:0006207">
    <property type="term" value="P:'de novo' pyrimidine nucleobase biosynthetic process"/>
    <property type="evidence" value="ECO:0007669"/>
    <property type="project" value="InterPro"/>
</dbReference>
<dbReference type="GO" id="GO:0044205">
    <property type="term" value="P:'de novo' UMP biosynthetic process"/>
    <property type="evidence" value="ECO:0007669"/>
    <property type="project" value="UniProtKB-UniPathway"/>
</dbReference>
<dbReference type="CDD" id="cd04725">
    <property type="entry name" value="OMP_decarboxylase_like"/>
    <property type="match status" value="1"/>
</dbReference>
<dbReference type="Gene3D" id="3.20.20.70">
    <property type="entry name" value="Aldolase class I"/>
    <property type="match status" value="1"/>
</dbReference>
<dbReference type="HAMAP" id="MF_01200_B">
    <property type="entry name" value="OMPdecase_type1_B"/>
    <property type="match status" value="1"/>
</dbReference>
<dbReference type="InterPro" id="IPR013785">
    <property type="entry name" value="Aldolase_TIM"/>
</dbReference>
<dbReference type="InterPro" id="IPR014732">
    <property type="entry name" value="OMPdecase"/>
</dbReference>
<dbReference type="InterPro" id="IPR018089">
    <property type="entry name" value="OMPdecase_AS"/>
</dbReference>
<dbReference type="InterPro" id="IPR047596">
    <property type="entry name" value="OMPdecase_bac"/>
</dbReference>
<dbReference type="InterPro" id="IPR001754">
    <property type="entry name" value="OMPdeCOase_dom"/>
</dbReference>
<dbReference type="InterPro" id="IPR011060">
    <property type="entry name" value="RibuloseP-bd_barrel"/>
</dbReference>
<dbReference type="NCBIfam" id="NF001273">
    <property type="entry name" value="PRK00230.1"/>
    <property type="match status" value="1"/>
</dbReference>
<dbReference type="NCBIfam" id="TIGR01740">
    <property type="entry name" value="pyrF"/>
    <property type="match status" value="1"/>
</dbReference>
<dbReference type="PANTHER" id="PTHR32119">
    <property type="entry name" value="OROTIDINE 5'-PHOSPHATE DECARBOXYLASE"/>
    <property type="match status" value="1"/>
</dbReference>
<dbReference type="PANTHER" id="PTHR32119:SF2">
    <property type="entry name" value="OROTIDINE 5'-PHOSPHATE DECARBOXYLASE"/>
    <property type="match status" value="1"/>
</dbReference>
<dbReference type="Pfam" id="PF00215">
    <property type="entry name" value="OMPdecase"/>
    <property type="match status" value="1"/>
</dbReference>
<dbReference type="SMART" id="SM00934">
    <property type="entry name" value="OMPdecase"/>
    <property type="match status" value="1"/>
</dbReference>
<dbReference type="SUPFAM" id="SSF51366">
    <property type="entry name" value="Ribulose-phoshate binding barrel"/>
    <property type="match status" value="1"/>
</dbReference>
<dbReference type="PROSITE" id="PS00156">
    <property type="entry name" value="OMPDECASE"/>
    <property type="match status" value="1"/>
</dbReference>
<comment type="function">
    <text evidence="1">Catalyzes the decarboxylation of orotidine 5'-monophosphate (OMP) to uridine 5'-monophosphate (UMP).</text>
</comment>
<comment type="catalytic activity">
    <reaction evidence="1">
        <text>orotidine 5'-phosphate + H(+) = UMP + CO2</text>
        <dbReference type="Rhea" id="RHEA:11596"/>
        <dbReference type="ChEBI" id="CHEBI:15378"/>
        <dbReference type="ChEBI" id="CHEBI:16526"/>
        <dbReference type="ChEBI" id="CHEBI:57538"/>
        <dbReference type="ChEBI" id="CHEBI:57865"/>
        <dbReference type="EC" id="4.1.1.23"/>
    </reaction>
</comment>
<comment type="pathway">
    <text evidence="1">Pyrimidine metabolism; UMP biosynthesis via de novo pathway; UMP from orotate: step 2/2.</text>
</comment>
<comment type="subunit">
    <text evidence="1">Homodimer.</text>
</comment>
<comment type="similarity">
    <text evidence="1">Belongs to the OMP decarboxylase family. Type 1 subfamily.</text>
</comment>
<protein>
    <recommendedName>
        <fullName evidence="1">Orotidine 5'-phosphate decarboxylase</fullName>
        <ecNumber evidence="1">4.1.1.23</ecNumber>
    </recommendedName>
    <alternativeName>
        <fullName evidence="1">OMP decarboxylase</fullName>
        <shortName evidence="1">OMPDCase</shortName>
        <shortName evidence="1">OMPdecase</shortName>
    </alternativeName>
</protein>
<gene>
    <name evidence="1" type="primary">pyrF</name>
</gene>
<reference key="1">
    <citation type="submission" date="1996-06" db="EMBL/GenBank/DDBJ databases">
        <authorList>
            <person name="Upeslacis E."/>
            <person name="Ihler G.M."/>
        </authorList>
    </citation>
    <scope>NUCLEOTIDE SEQUENCE [GENOMIC DNA]</scope>
</reference>